<proteinExistence type="evidence at protein level"/>
<gene>
    <name evidence="5" type="primary">notC</name>
</gene>
<accession>E0Y3X0</accession>
<dbReference type="EC" id="2.5.1.-" evidence="3"/>
<dbReference type="EMBL" id="GU564534">
    <property type="protein sequence ID" value="ADM34131.1"/>
    <property type="molecule type" value="Genomic_DNA"/>
</dbReference>
<dbReference type="EMBL" id="HM622670">
    <property type="protein sequence ID" value="ADM34136.1"/>
    <property type="molecule type" value="Genomic_DNA"/>
</dbReference>
<dbReference type="SMR" id="E0Y3X0"/>
<dbReference type="BioCyc" id="MetaCyc:MONOMER-19051"/>
<dbReference type="GO" id="GO:0004659">
    <property type="term" value="F:prenyltransferase activity"/>
    <property type="evidence" value="ECO:0007669"/>
    <property type="project" value="UniProtKB-KW"/>
</dbReference>
<dbReference type="GO" id="GO:0009820">
    <property type="term" value="P:alkaloid metabolic process"/>
    <property type="evidence" value="ECO:0007669"/>
    <property type="project" value="UniProtKB-KW"/>
</dbReference>
<dbReference type="CDD" id="cd13929">
    <property type="entry name" value="PT-DMATS_CymD"/>
    <property type="match status" value="1"/>
</dbReference>
<dbReference type="InterPro" id="IPR033964">
    <property type="entry name" value="Aro_prenylTrfase"/>
</dbReference>
<dbReference type="InterPro" id="IPR017795">
    <property type="entry name" value="Aro_prenylTrfase_DMATS"/>
</dbReference>
<dbReference type="InterPro" id="IPR012148">
    <property type="entry name" value="DMATS-type_fun"/>
</dbReference>
<dbReference type="NCBIfam" id="TIGR03429">
    <property type="entry name" value="arom_pren_DMATS"/>
    <property type="match status" value="1"/>
</dbReference>
<dbReference type="PANTHER" id="PTHR40627">
    <property type="entry name" value="INDOLE PRENYLTRANSFERASE TDIB-RELATED"/>
    <property type="match status" value="1"/>
</dbReference>
<dbReference type="PANTHER" id="PTHR40627:SF3">
    <property type="entry name" value="PRENYLTRANSFERASE ASQH2-RELATED"/>
    <property type="match status" value="1"/>
</dbReference>
<dbReference type="Pfam" id="PF11991">
    <property type="entry name" value="Trp_DMAT"/>
    <property type="match status" value="1"/>
</dbReference>
<dbReference type="PIRSF" id="PIRSF000509">
    <property type="entry name" value="Trp_DMAT"/>
    <property type="match status" value="1"/>
</dbReference>
<dbReference type="SFLD" id="SFLDS00036">
    <property type="entry name" value="Aromatic_Prenyltransferase"/>
    <property type="match status" value="1"/>
</dbReference>
<dbReference type="SFLD" id="SFLDG01162">
    <property type="entry name" value="I"/>
    <property type="match status" value="1"/>
</dbReference>
<sequence length="426" mass="49102">MAIEEKSTSAEPGPYDALSRFSSLTGEDDRKWWEHTGPVLEKVMRDSGYELQSQYIYLYFVQQHLIPYLGKFPTRGQDDHRWQSNLTPYKVPYELSWNVSHKVVRISWDPVCDASGTENDAFNKKAIHDCTRQLAELDSTVILDRYRLLHKDLVITDEEEQQLLRRDVLPKSGRGQHNLAVDFQEGGITLKVYFYPYMKFLATGTPIEELFFSAIEKLRIADIDEAVGMLKCFLSPKSDDGKPSVDEKVFPSLLACDLCDPSKSRIKYYVIDKWVKWERIANLWTIGGRRLEDPYCAKGLALLKELWDLLAIPEGDRGDIWPNLVLGQPPTHLMTTIANYTLSPASRFPEPQVYLTTFGLNDMAIIDALTAFYERVGFTDMAKSYKKNVQSYYPNLDLNQTNWVHEAVSFSYRNSKPYLSVYYSPF</sequence>
<keyword id="KW-0017">Alkaloid metabolism</keyword>
<keyword id="KW-0637">Prenyltransferase</keyword>
<keyword id="KW-0808">Transferase</keyword>
<comment type="function">
    <text evidence="3 4 7">Prenyltransferase; part of the gene cluster that mediates the biosynthesis of notoamide, a fungal indole alkaloid that belongs to a family of natural products containing a characteristic bicyclo[2.2.2]diazaoctane core (PubMed:20722388). The first step of notoamide biosynthesis involves coupling of L-proline and L-tryptophan by the bimodular NRPS notE, to produce cyclo-L-tryptophan-L-proline called brevianamide F (PubMed:20722388). The reverse prenyltransferase notF then acts as a deoxybrevianamide E synthase and converts brevianamide F to deoxybrevianamide E via reverse prenylation at C-2 of the indole ring leading to the bicyclo[2.2.2]diazaoctane core (PubMed:20722388). Deoxybrevianamide E is further hydroxylated at C-6 of the indole ring, likely catalyzed by the cytochrome P450 monooxygenase notG, to yield 6-hydroxy-deoxybrevianamide E (Probable). 6-hydroxy-deoxybrevianamide E is a specific substrate of the prenyltransferase notC for normal prenylation at C-7 to produce 6-hydroxy-7-prenyl-deoxybrevianamide, also called notoamide S (PubMed:20722388). As the proposed pivotal branching point in notoamide biosynthesis, notoamide S can be diverted to notoamide E through an oxidative pyran ring closure putatively catalyzed by either notH cytochrome P450 monooxygenase or the notD FAD-linked oxidoreductase (Probable). This step would be followed by an indole 2,3-epoxidation-initiated pinacol-like rearrangement catalyzed by the notB FAD-dependent monooxygenase leading to the formation of notoamide C and notoamide D (PubMed:22188465). On the other hand notoamide S is converted to notoamide T by notH (or notD), a bifunctional oxidase that also functions as the intramolecular Diels-Alderase responsible for generation of (+)-notoamide T (Probable). To generate antipodal (-)-notoaminide T, notH' (or notD') in Aspergillus versicolor is expected to catalyze a Diels-Alder reaction leading to the opposite stereochemistry (Probable). The remaining oxidoreductase notD (or notH) likely catalyzes the oxidative pyran ring formation to yield (+)-stephacidin A (Probable). The FAD-dependent monooxygenase notI is highly similar to notB and is predicted to catalyze a similar conversion from (+)-stephacidin A to (-)-notoamide B via the 2,3-epoxidation of (+)-stephacidin A followed by a pinacol-type rearrangement (Probable). Finally, it remains unclear which enzyme could be responsible for the final hydroxylation steps leading to notoamide A and sclerotiamide (Probable).</text>
</comment>
<comment type="catalytic activity">
    <reaction evidence="3">
        <text>6-hydroxydeoxybrevianamide E + dimethylallyl diphosphate = notoamide S + diphosphate</text>
        <dbReference type="Rhea" id="RHEA:62344"/>
        <dbReference type="ChEBI" id="CHEBI:33019"/>
        <dbReference type="ChEBI" id="CHEBI:57623"/>
        <dbReference type="ChEBI" id="CHEBI:145682"/>
        <dbReference type="ChEBI" id="CHEBI:145683"/>
    </reaction>
    <physiologicalReaction direction="left-to-right" evidence="3">
        <dbReference type="Rhea" id="RHEA:62345"/>
    </physiologicalReaction>
</comment>
<comment type="activity regulation">
    <text evidence="3">Addition of 5 mM Mg(2+), Ca(2+) or Mn(2+) slightly enhances catalysis (about 100-120%) (PubMed:20722388). Significant reduction of enzyme activity (2%-35%) is observed with Cu(2+), Zn(2+), Fe(2+), or Sn(2+) (5 mM) (PubMed:20722388).</text>
</comment>
<comment type="biophysicochemical properties">
    <kinetics>
        <KM evidence="3">2.64 uM for 6-hydroxy-deoxybrevianamide E</KM>
        <KM evidence="3">1.89 uM for dimethylallyl diphosphate (DMAPP)</KM>
        <Vmax evidence="3">1.18 uM/min/mg enzyme toward dimethylallyl diphosphate (DMAPP)</Vmax>
        <Vmax evidence="3">1.45 uM/min/mg enzyme toward 6-hydroxy-deoxybrevianamide E</Vmax>
    </kinetics>
    <phDependence>
        <text evidence="3">Optimum pH is 6-9.</text>
    </phDependence>
    <temperatureDependence>
        <text evidence="3">Optimum temperature is 16 to 42 degrees Celsius.</text>
    </temperatureDependence>
</comment>
<comment type="pathway">
    <text evidence="3">Alkaloid biosynthesis.</text>
</comment>
<comment type="biotechnology">
    <text evidence="2">Notoamides have been shown to exhibit antitumoral activities (PubMed:17304611). Notoamides A-C show moderate cytotoxicity against HeLa and L1210 cells with IC(50) values in the range of 22-52 mg/ml, but the IC(50) value of notoamide D is greater than 100 mg/ml (PubMed:17304611). Moreover, notoamide C induces G2/M-cell cycle arrest at a concentration of 6.3 mg/ml (PubMed:17304611).</text>
</comment>
<comment type="similarity">
    <text evidence="6">Belongs to the tryptophan dimethylallyltransferase family.</text>
</comment>
<evidence type="ECO:0000250" key="1">
    <source>
        <dbReference type="UniProtKB" id="Q4WAW7"/>
    </source>
</evidence>
<evidence type="ECO:0000269" key="2">
    <source>
    </source>
</evidence>
<evidence type="ECO:0000269" key="3">
    <source>
    </source>
</evidence>
<evidence type="ECO:0000269" key="4">
    <source>
    </source>
</evidence>
<evidence type="ECO:0000303" key="5">
    <source>
    </source>
</evidence>
<evidence type="ECO:0000305" key="6"/>
<evidence type="ECO:0000305" key="7">
    <source>
    </source>
</evidence>
<reference key="1">
    <citation type="journal article" date="2010" name="J. Am. Chem. Soc.">
        <title>Genome-based characterization of two prenylation steps in the assembly of the stephacidin and notoamide anticancer agents in a marine-derived Aspergillus sp.</title>
        <authorList>
            <person name="Ding Y."/>
            <person name="de Wet J.R."/>
            <person name="Cavalcoli J."/>
            <person name="Li S."/>
            <person name="Greshock T.J."/>
            <person name="Miller K.A."/>
            <person name="Finefield J.M."/>
            <person name="Sunderhaus J.D."/>
            <person name="McAfoos T.J."/>
            <person name="Tsukamoto S."/>
            <person name="Williams R.M."/>
            <person name="Sherman D.H."/>
        </authorList>
    </citation>
    <scope>NUCLEOTIDE SEQUENCE [GENOMIC DNA]</scope>
    <scope>FUNCTION</scope>
    <scope>CATALYTIC ACTIVITY</scope>
    <scope>BIOPHYSICOCHEMICAL PROPERTIES</scope>
    <scope>ACTIVITY REGULATION</scope>
    <scope>PATHWAY</scope>
    <source>
        <strain>MF297-2</strain>
    </source>
</reference>
<reference key="2">
    <citation type="journal article" date="2007" name="Angew. Chem. Int. Ed.">
        <title>Notoamides A-D: prenylated indole alkaloids isolated from a marine-derived fungus, Aspergillus sp.</title>
        <authorList>
            <person name="Kato H."/>
            <person name="Yoshida T."/>
            <person name="Tokue T."/>
            <person name="Nojiri Y."/>
            <person name="Hirota H."/>
            <person name="Ohta T."/>
            <person name="Williams R.M."/>
            <person name="Tsukamoto S."/>
        </authorList>
    </citation>
    <scope>BIOTECHNOLOGY</scope>
</reference>
<reference key="3">
    <citation type="journal article" date="2012" name="J. Am. Chem. Soc.">
        <title>Biochemical characterization of NotB as an FAD-dependent oxidase in the biosynthesis of notoamide indole alkaloids.</title>
        <authorList>
            <person name="Li S."/>
            <person name="Finefield J.M."/>
            <person name="Sunderhaus J.D."/>
            <person name="McAfoos T.J."/>
            <person name="Williams R.M."/>
            <person name="Sherman D.H."/>
        </authorList>
    </citation>
    <scope>FUNCTION</scope>
</reference>
<reference key="4">
    <citation type="journal article" date="2012" name="Med. Chem. Commun.">
        <title>Comparative analysis of the biosynthetic systems for fungal bicyclo[2.2.2]diazaoctane indole alkaloids: the (+)/(-)-notoamide, paraherquamide and malbrancheamide pathways.</title>
        <authorList>
            <person name="Li S."/>
            <person name="Anand K."/>
            <person name="Tran H."/>
            <person name="Yu F."/>
            <person name="Finefield J.M."/>
            <person name="Sunderhaus J.D."/>
            <person name="McAfoos T.J."/>
            <person name="Tsukamoto S."/>
            <person name="Williams R.M."/>
            <person name="Sherman D.H."/>
        </authorList>
    </citation>
    <scope>FUNCTION</scope>
</reference>
<name>NOTC_ASPSM</name>
<feature type="chain" id="PRO_0000448809" description="6-Hydroxy-7-prenyldeoxybrevianamide E synthase notC">
    <location>
        <begin position="1"/>
        <end position="426"/>
    </location>
</feature>
<feature type="binding site" evidence="1">
    <location>
        <position position="94"/>
    </location>
    <ligand>
        <name>substrate</name>
    </ligand>
</feature>
<feature type="binding site" evidence="1">
    <location>
        <position position="105"/>
    </location>
    <ligand>
        <name>dimethylallyl diphosphate</name>
        <dbReference type="ChEBI" id="CHEBI:57623"/>
    </ligand>
</feature>
<feature type="binding site" evidence="1">
    <location>
        <position position="191"/>
    </location>
    <ligand>
        <name>dimethylallyl diphosphate</name>
        <dbReference type="ChEBI" id="CHEBI:57623"/>
    </ligand>
</feature>
<feature type="binding site" evidence="1">
    <location>
        <position position="193"/>
    </location>
    <ligand>
        <name>dimethylallyl diphosphate</name>
        <dbReference type="ChEBI" id="CHEBI:57623"/>
    </ligand>
</feature>
<feature type="binding site" evidence="1">
    <location>
        <position position="195"/>
    </location>
    <ligand>
        <name>substrate</name>
    </ligand>
</feature>
<feature type="binding site" evidence="1">
    <location>
        <position position="267"/>
    </location>
    <ligand>
        <name>dimethylallyl diphosphate</name>
        <dbReference type="ChEBI" id="CHEBI:57623"/>
    </ligand>
</feature>
<feature type="binding site" evidence="1">
    <location>
        <position position="269"/>
    </location>
    <ligand>
        <name>dimethylallyl diphosphate</name>
        <dbReference type="ChEBI" id="CHEBI:57623"/>
    </ligand>
</feature>
<feature type="binding site" evidence="1">
    <location>
        <position position="352"/>
    </location>
    <ligand>
        <name>dimethylallyl diphosphate</name>
        <dbReference type="ChEBI" id="CHEBI:57623"/>
    </ligand>
</feature>
<feature type="binding site" evidence="1">
    <location>
        <position position="354"/>
    </location>
    <ligand>
        <name>dimethylallyl diphosphate</name>
        <dbReference type="ChEBI" id="CHEBI:57623"/>
    </ligand>
</feature>
<feature type="binding site" evidence="1">
    <location>
        <position position="418"/>
    </location>
    <ligand>
        <name>dimethylallyl diphosphate</name>
        <dbReference type="ChEBI" id="CHEBI:57623"/>
    </ligand>
</feature>
<feature type="binding site" evidence="1">
    <location>
        <position position="422"/>
    </location>
    <ligand>
        <name>dimethylallyl diphosphate</name>
        <dbReference type="ChEBI" id="CHEBI:57623"/>
    </ligand>
</feature>
<organism>
    <name type="scientific">Aspergillus sp. (strain MF297-2)</name>
    <dbReference type="NCBI Taxonomy" id="877550"/>
    <lineage>
        <taxon>Eukaryota</taxon>
        <taxon>Fungi</taxon>
        <taxon>Dikarya</taxon>
        <taxon>Ascomycota</taxon>
        <taxon>Pezizomycotina</taxon>
        <taxon>Eurotiomycetes</taxon>
        <taxon>Eurotiomycetidae</taxon>
        <taxon>Eurotiales</taxon>
        <taxon>Aspergillaceae</taxon>
        <taxon>Aspergillus</taxon>
    </lineage>
</organism>
<protein>
    <recommendedName>
        <fullName evidence="5">6-Hydroxy-7-prenyldeoxybrevianamide E synthase notC</fullName>
        <ecNumber evidence="3">2.5.1.-</ecNumber>
    </recommendedName>
    <alternativeName>
        <fullName evidence="5">Notoamide biosynthesis cluster protein C</fullName>
    </alternativeName>
    <alternativeName>
        <fullName evidence="5">Prenyltransferase notC</fullName>
    </alternativeName>
</protein>